<feature type="chain" id="PRO_1000146674" description="Formate--tetrahydrofolate ligase">
    <location>
        <begin position="1"/>
        <end position="562"/>
    </location>
</feature>
<feature type="binding site" evidence="1">
    <location>
        <begin position="71"/>
        <end position="78"/>
    </location>
    <ligand>
        <name>ATP</name>
        <dbReference type="ChEBI" id="CHEBI:30616"/>
    </ligand>
</feature>
<evidence type="ECO:0000255" key="1">
    <source>
        <dbReference type="HAMAP-Rule" id="MF_01543"/>
    </source>
</evidence>
<dbReference type="EC" id="6.3.4.3" evidence="1"/>
<dbReference type="EMBL" id="CP001177">
    <property type="protein sequence ID" value="ACJ77975.1"/>
    <property type="molecule type" value="Genomic_DNA"/>
</dbReference>
<dbReference type="SMR" id="B7HP29"/>
<dbReference type="KEGG" id="bcr:BCAH187_A2201"/>
<dbReference type="HOGENOM" id="CLU_003601_3_3_9"/>
<dbReference type="UniPathway" id="UPA00193"/>
<dbReference type="Proteomes" id="UP000002214">
    <property type="component" value="Chromosome"/>
</dbReference>
<dbReference type="GO" id="GO:0005524">
    <property type="term" value="F:ATP binding"/>
    <property type="evidence" value="ECO:0007669"/>
    <property type="project" value="UniProtKB-UniRule"/>
</dbReference>
<dbReference type="GO" id="GO:0004329">
    <property type="term" value="F:formate-tetrahydrofolate ligase activity"/>
    <property type="evidence" value="ECO:0007669"/>
    <property type="project" value="UniProtKB-UniRule"/>
</dbReference>
<dbReference type="GO" id="GO:0035999">
    <property type="term" value="P:tetrahydrofolate interconversion"/>
    <property type="evidence" value="ECO:0007669"/>
    <property type="project" value="UniProtKB-UniRule"/>
</dbReference>
<dbReference type="CDD" id="cd00477">
    <property type="entry name" value="FTHFS"/>
    <property type="match status" value="1"/>
</dbReference>
<dbReference type="FunFam" id="3.30.1510.10:FF:000001">
    <property type="entry name" value="Formate--tetrahydrofolate ligase"/>
    <property type="match status" value="1"/>
</dbReference>
<dbReference type="FunFam" id="3.10.410.10:FF:000001">
    <property type="entry name" value="Putative formate--tetrahydrofolate ligase"/>
    <property type="match status" value="1"/>
</dbReference>
<dbReference type="Gene3D" id="3.30.1510.10">
    <property type="entry name" value="Domain 2, N(10)-formyltetrahydrofolate synthetase"/>
    <property type="match status" value="1"/>
</dbReference>
<dbReference type="Gene3D" id="3.10.410.10">
    <property type="entry name" value="Formyltetrahydrofolate synthetase, domain 3"/>
    <property type="match status" value="1"/>
</dbReference>
<dbReference type="Gene3D" id="3.40.50.300">
    <property type="entry name" value="P-loop containing nucleotide triphosphate hydrolases"/>
    <property type="match status" value="1"/>
</dbReference>
<dbReference type="HAMAP" id="MF_01543">
    <property type="entry name" value="FTHFS"/>
    <property type="match status" value="1"/>
</dbReference>
<dbReference type="InterPro" id="IPR000559">
    <property type="entry name" value="Formate_THF_ligase"/>
</dbReference>
<dbReference type="InterPro" id="IPR020628">
    <property type="entry name" value="Formate_THF_ligase_CS"/>
</dbReference>
<dbReference type="InterPro" id="IPR027417">
    <property type="entry name" value="P-loop_NTPase"/>
</dbReference>
<dbReference type="NCBIfam" id="NF010030">
    <property type="entry name" value="PRK13505.1"/>
    <property type="match status" value="1"/>
</dbReference>
<dbReference type="Pfam" id="PF01268">
    <property type="entry name" value="FTHFS"/>
    <property type="match status" value="1"/>
</dbReference>
<dbReference type="SUPFAM" id="SSF52540">
    <property type="entry name" value="P-loop containing nucleoside triphosphate hydrolases"/>
    <property type="match status" value="1"/>
</dbReference>
<dbReference type="PROSITE" id="PS00721">
    <property type="entry name" value="FTHFS_1"/>
    <property type="match status" value="1"/>
</dbReference>
<dbReference type="PROSITE" id="PS00722">
    <property type="entry name" value="FTHFS_2"/>
    <property type="match status" value="1"/>
</dbReference>
<name>FTHS_BACC7</name>
<accession>B7HP29</accession>
<organism>
    <name type="scientific">Bacillus cereus (strain AH187)</name>
    <dbReference type="NCBI Taxonomy" id="405534"/>
    <lineage>
        <taxon>Bacteria</taxon>
        <taxon>Bacillati</taxon>
        <taxon>Bacillota</taxon>
        <taxon>Bacilli</taxon>
        <taxon>Bacillales</taxon>
        <taxon>Bacillaceae</taxon>
        <taxon>Bacillus</taxon>
        <taxon>Bacillus cereus group</taxon>
    </lineage>
</organism>
<protein>
    <recommendedName>
        <fullName evidence="1">Formate--tetrahydrofolate ligase</fullName>
        <ecNumber evidence="1">6.3.4.3</ecNumber>
    </recommendedName>
    <alternativeName>
        <fullName evidence="1">Formyltetrahydrofolate synthetase</fullName>
        <shortName evidence="1">FHS</shortName>
        <shortName evidence="1">FTHFS</shortName>
    </alternativeName>
</protein>
<proteinExistence type="inferred from homology"/>
<gene>
    <name evidence="1" type="primary">fhs</name>
    <name type="ordered locus">BCAH187_A2201</name>
</gene>
<comment type="catalytic activity">
    <reaction evidence="1">
        <text>(6S)-5,6,7,8-tetrahydrofolate + formate + ATP = (6R)-10-formyltetrahydrofolate + ADP + phosphate</text>
        <dbReference type="Rhea" id="RHEA:20221"/>
        <dbReference type="ChEBI" id="CHEBI:15740"/>
        <dbReference type="ChEBI" id="CHEBI:30616"/>
        <dbReference type="ChEBI" id="CHEBI:43474"/>
        <dbReference type="ChEBI" id="CHEBI:57453"/>
        <dbReference type="ChEBI" id="CHEBI:195366"/>
        <dbReference type="ChEBI" id="CHEBI:456216"/>
        <dbReference type="EC" id="6.3.4.3"/>
    </reaction>
</comment>
<comment type="pathway">
    <text evidence="1">One-carbon metabolism; tetrahydrofolate interconversion.</text>
</comment>
<comment type="similarity">
    <text evidence="1">Belongs to the formate--tetrahydrofolate ligase family.</text>
</comment>
<keyword id="KW-0067">ATP-binding</keyword>
<keyword id="KW-0436">Ligase</keyword>
<keyword id="KW-0547">Nucleotide-binding</keyword>
<keyword id="KW-0554">One-carbon metabolism</keyword>
<sequence length="562" mass="60477">MTTTTTVKSDIEIAQEASMKKIQEIAAELNILEDELEPYGHYKGKLSLDIFKRLQNEEDGKVVLVTAINPTPAGEGKSTVTVGLGQAFNKIGKKTVIALREPSLGPTMGLKGGAAGGGFSQVVPMEDINLHFTGDIHAITTANNALAAFIDNHIQQGNTLGIDTRKIVWKRCVDLNDRALRNVVIGLGGPVQGVPREDGFDITVASEIMAVFCLATDIQDLKARLSRIVVAYNFANQPVTVKDLGVEGALTLLLKDALKPNLVQTLENTPAIIHGGPFANIAHGCNSVIATTMAAKLGDYVITEAGFGADLGAEKFLDIKARAAGIKPEAVVIVATIRALKMHGGVAKDQLKEENVDALAKGMENLQKHVETIQSFGVPFVIAINKFITDTDAEVAYLQEWCNERGYAVSLTEVWEKGGQGGVDLAEKVLKEIEKGENNYAPLYELELPLEEKIRTIAQKVYGAKDIEFAPKARKQLAQYEGEGWSNLPICMAKTQYSLSDDATKLGRPSDFIVTIRELKPSIGAGFIVALTGTMLTMPGLPKQPAALQMDVNEDGKAVGLF</sequence>
<reference key="1">
    <citation type="submission" date="2008-10" db="EMBL/GenBank/DDBJ databases">
        <title>Genome sequence of Bacillus cereus AH187.</title>
        <authorList>
            <person name="Dodson R.J."/>
            <person name="Durkin A.S."/>
            <person name="Rosovitz M.J."/>
            <person name="Rasko D.A."/>
            <person name="Kolsto A.B."/>
            <person name="Okstad O.A."/>
            <person name="Ravel J."/>
            <person name="Sutton G."/>
        </authorList>
    </citation>
    <scope>NUCLEOTIDE SEQUENCE [LARGE SCALE GENOMIC DNA]</scope>
    <source>
        <strain>AH187</strain>
    </source>
</reference>